<accession>Q38772</accession>
<dbReference type="EC" id="2.7.11.22"/>
<dbReference type="EC" id="2.7.11.23"/>
<dbReference type="EMBL" id="X97637">
    <property type="protein sequence ID" value="CAA66233.1"/>
    <property type="status" value="ALT_INIT"/>
    <property type="molecule type" value="mRNA"/>
</dbReference>
<dbReference type="PIR" id="T17115">
    <property type="entry name" value="T17115"/>
</dbReference>
<dbReference type="SMR" id="Q38772"/>
<dbReference type="BRENDA" id="2.7.11.22">
    <property type="organism ID" value="376"/>
</dbReference>
<dbReference type="GO" id="GO:0000307">
    <property type="term" value="C:cyclin-dependent protein kinase holoenzyme complex"/>
    <property type="evidence" value="ECO:0007669"/>
    <property type="project" value="TreeGrafter"/>
</dbReference>
<dbReference type="GO" id="GO:0005737">
    <property type="term" value="C:cytoplasm"/>
    <property type="evidence" value="ECO:0007669"/>
    <property type="project" value="TreeGrafter"/>
</dbReference>
<dbReference type="GO" id="GO:0005634">
    <property type="term" value="C:nucleus"/>
    <property type="evidence" value="ECO:0007669"/>
    <property type="project" value="TreeGrafter"/>
</dbReference>
<dbReference type="GO" id="GO:0005524">
    <property type="term" value="F:ATP binding"/>
    <property type="evidence" value="ECO:0007669"/>
    <property type="project" value="UniProtKB-KW"/>
</dbReference>
<dbReference type="GO" id="GO:0030332">
    <property type="term" value="F:cyclin binding"/>
    <property type="evidence" value="ECO:0007669"/>
    <property type="project" value="TreeGrafter"/>
</dbReference>
<dbReference type="GO" id="GO:0004693">
    <property type="term" value="F:cyclin-dependent protein serine/threonine kinase activity"/>
    <property type="evidence" value="ECO:0007669"/>
    <property type="project" value="UniProtKB-EC"/>
</dbReference>
<dbReference type="GO" id="GO:0106310">
    <property type="term" value="F:protein serine kinase activity"/>
    <property type="evidence" value="ECO:0007669"/>
    <property type="project" value="RHEA"/>
</dbReference>
<dbReference type="GO" id="GO:0008353">
    <property type="term" value="F:RNA polymerase II CTD heptapeptide repeat kinase activity"/>
    <property type="evidence" value="ECO:0007669"/>
    <property type="project" value="UniProtKB-EC"/>
</dbReference>
<dbReference type="GO" id="GO:0051301">
    <property type="term" value="P:cell division"/>
    <property type="evidence" value="ECO:0007669"/>
    <property type="project" value="UniProtKB-KW"/>
</dbReference>
<dbReference type="GO" id="GO:0000082">
    <property type="term" value="P:G1/S transition of mitotic cell cycle"/>
    <property type="evidence" value="ECO:0007669"/>
    <property type="project" value="TreeGrafter"/>
</dbReference>
<dbReference type="GO" id="GO:0010389">
    <property type="term" value="P:regulation of G2/M transition of mitotic cell cycle"/>
    <property type="evidence" value="ECO:0007669"/>
    <property type="project" value="TreeGrafter"/>
</dbReference>
<dbReference type="GO" id="GO:0051445">
    <property type="term" value="P:regulation of meiotic cell cycle"/>
    <property type="evidence" value="ECO:0007669"/>
    <property type="project" value="TreeGrafter"/>
</dbReference>
<dbReference type="GO" id="GO:0007165">
    <property type="term" value="P:signal transduction"/>
    <property type="evidence" value="ECO:0007669"/>
    <property type="project" value="TreeGrafter"/>
</dbReference>
<dbReference type="CDD" id="cd07835">
    <property type="entry name" value="STKc_CDK1_CdkB_like"/>
    <property type="match status" value="1"/>
</dbReference>
<dbReference type="FunFam" id="3.30.200.20:FF:000187">
    <property type="entry name" value="Cell division control protein 2"/>
    <property type="match status" value="1"/>
</dbReference>
<dbReference type="FunFam" id="1.10.510.10:FF:000280">
    <property type="entry name" value="Cell division control protein 2 homolog"/>
    <property type="match status" value="1"/>
</dbReference>
<dbReference type="Gene3D" id="3.30.200.20">
    <property type="entry name" value="Phosphorylase Kinase, domain 1"/>
    <property type="match status" value="1"/>
</dbReference>
<dbReference type="Gene3D" id="1.10.510.10">
    <property type="entry name" value="Transferase(Phosphotransferase) domain 1"/>
    <property type="match status" value="1"/>
</dbReference>
<dbReference type="InterPro" id="IPR050108">
    <property type="entry name" value="CDK"/>
</dbReference>
<dbReference type="InterPro" id="IPR011009">
    <property type="entry name" value="Kinase-like_dom_sf"/>
</dbReference>
<dbReference type="InterPro" id="IPR000719">
    <property type="entry name" value="Prot_kinase_dom"/>
</dbReference>
<dbReference type="InterPro" id="IPR017441">
    <property type="entry name" value="Protein_kinase_ATP_BS"/>
</dbReference>
<dbReference type="InterPro" id="IPR008271">
    <property type="entry name" value="Ser/Thr_kinase_AS"/>
</dbReference>
<dbReference type="PANTHER" id="PTHR24056">
    <property type="entry name" value="CELL DIVISION PROTEIN KINASE"/>
    <property type="match status" value="1"/>
</dbReference>
<dbReference type="PANTHER" id="PTHR24056:SF548">
    <property type="entry name" value="CYCLIN-DEPENDENT KINASE A-1"/>
    <property type="match status" value="1"/>
</dbReference>
<dbReference type="Pfam" id="PF00069">
    <property type="entry name" value="Pkinase"/>
    <property type="match status" value="1"/>
</dbReference>
<dbReference type="SMART" id="SM00220">
    <property type="entry name" value="S_TKc"/>
    <property type="match status" value="1"/>
</dbReference>
<dbReference type="SUPFAM" id="SSF56112">
    <property type="entry name" value="Protein kinase-like (PK-like)"/>
    <property type="match status" value="1"/>
</dbReference>
<dbReference type="PROSITE" id="PS00107">
    <property type="entry name" value="PROTEIN_KINASE_ATP"/>
    <property type="match status" value="1"/>
</dbReference>
<dbReference type="PROSITE" id="PS50011">
    <property type="entry name" value="PROTEIN_KINASE_DOM"/>
    <property type="match status" value="1"/>
</dbReference>
<dbReference type="PROSITE" id="PS00108">
    <property type="entry name" value="PROTEIN_KINASE_ST"/>
    <property type="match status" value="1"/>
</dbReference>
<evidence type="ECO:0000250" key="1"/>
<evidence type="ECO:0000255" key="2">
    <source>
        <dbReference type="PROSITE-ProRule" id="PRU00159"/>
    </source>
</evidence>
<evidence type="ECO:0000255" key="3">
    <source>
        <dbReference type="PROSITE-ProRule" id="PRU10027"/>
    </source>
</evidence>
<evidence type="ECO:0000305" key="4"/>
<protein>
    <recommendedName>
        <fullName>Cell division control protein 2 homolog A</fullName>
        <ecNumber>2.7.11.22</ecNumber>
        <ecNumber>2.7.11.23</ecNumber>
    </recommendedName>
</protein>
<organism>
    <name type="scientific">Antirrhinum majus</name>
    <name type="common">Garden snapdragon</name>
    <dbReference type="NCBI Taxonomy" id="4151"/>
    <lineage>
        <taxon>Eukaryota</taxon>
        <taxon>Viridiplantae</taxon>
        <taxon>Streptophyta</taxon>
        <taxon>Embryophyta</taxon>
        <taxon>Tracheophyta</taxon>
        <taxon>Spermatophyta</taxon>
        <taxon>Magnoliopsida</taxon>
        <taxon>eudicotyledons</taxon>
        <taxon>Gunneridae</taxon>
        <taxon>Pentapetalae</taxon>
        <taxon>asterids</taxon>
        <taxon>lamiids</taxon>
        <taxon>Lamiales</taxon>
        <taxon>Plantaginaceae</taxon>
        <taxon>Antirrhineae</taxon>
        <taxon>Antirrhinum</taxon>
    </lineage>
</organism>
<proteinExistence type="evidence at transcript level"/>
<feature type="chain" id="PRO_0000085745" description="Cell division control protein 2 homolog A">
    <location>
        <begin position="1"/>
        <end position="294"/>
    </location>
</feature>
<feature type="domain" description="Protein kinase" evidence="2">
    <location>
        <begin position="4"/>
        <end position="287"/>
    </location>
</feature>
<feature type="active site" description="Proton acceptor" evidence="2 3">
    <location>
        <position position="127"/>
    </location>
</feature>
<feature type="binding site" evidence="2">
    <location>
        <begin position="10"/>
        <end position="18"/>
    </location>
    <ligand>
        <name>ATP</name>
        <dbReference type="ChEBI" id="CHEBI:30616"/>
    </ligand>
</feature>
<feature type="binding site" evidence="2">
    <location>
        <position position="33"/>
    </location>
    <ligand>
        <name>ATP</name>
        <dbReference type="ChEBI" id="CHEBI:30616"/>
    </ligand>
</feature>
<feature type="modified residue" description="Phosphothreonine" evidence="1">
    <location>
        <position position="14"/>
    </location>
</feature>
<feature type="modified residue" description="Phosphotyrosine" evidence="1">
    <location>
        <position position="15"/>
    </location>
</feature>
<feature type="modified residue" description="Phosphothreonine; by CAK" evidence="1">
    <location>
        <position position="161"/>
    </location>
</feature>
<keyword id="KW-0067">ATP-binding</keyword>
<keyword id="KW-0131">Cell cycle</keyword>
<keyword id="KW-0132">Cell division</keyword>
<keyword id="KW-0418">Kinase</keyword>
<keyword id="KW-0498">Mitosis</keyword>
<keyword id="KW-0547">Nucleotide-binding</keyword>
<keyword id="KW-0597">Phosphoprotein</keyword>
<keyword id="KW-0723">Serine/threonine-protein kinase</keyword>
<keyword id="KW-0808">Transferase</keyword>
<gene>
    <name type="primary">CDC2A</name>
</gene>
<name>CDC2A_ANTMA</name>
<reference key="1">
    <citation type="journal article" date="1996" name="Plant Cell">
        <title>Distinct classes of cdc2-related genes are differentially expressed during the cell division cycle in plants.</title>
        <authorList>
            <person name="Fobert P.R."/>
            <person name="Gaudin V."/>
            <person name="Lunness P."/>
            <person name="Coen E.S."/>
            <person name="Doonan J.H."/>
        </authorList>
    </citation>
    <scope>NUCLEOTIDE SEQUENCE [MRNA]</scope>
</reference>
<comment type="function">
    <text>Plays a key role in the control of the eukaryotic cell cycle.</text>
</comment>
<comment type="catalytic activity">
    <reaction>
        <text>L-seryl-[protein] + ATP = O-phospho-L-seryl-[protein] + ADP + H(+)</text>
        <dbReference type="Rhea" id="RHEA:17989"/>
        <dbReference type="Rhea" id="RHEA-COMP:9863"/>
        <dbReference type="Rhea" id="RHEA-COMP:11604"/>
        <dbReference type="ChEBI" id="CHEBI:15378"/>
        <dbReference type="ChEBI" id="CHEBI:29999"/>
        <dbReference type="ChEBI" id="CHEBI:30616"/>
        <dbReference type="ChEBI" id="CHEBI:83421"/>
        <dbReference type="ChEBI" id="CHEBI:456216"/>
        <dbReference type="EC" id="2.7.11.22"/>
    </reaction>
</comment>
<comment type="catalytic activity">
    <reaction>
        <text>L-threonyl-[protein] + ATP = O-phospho-L-threonyl-[protein] + ADP + H(+)</text>
        <dbReference type="Rhea" id="RHEA:46608"/>
        <dbReference type="Rhea" id="RHEA-COMP:11060"/>
        <dbReference type="Rhea" id="RHEA-COMP:11605"/>
        <dbReference type="ChEBI" id="CHEBI:15378"/>
        <dbReference type="ChEBI" id="CHEBI:30013"/>
        <dbReference type="ChEBI" id="CHEBI:30616"/>
        <dbReference type="ChEBI" id="CHEBI:61977"/>
        <dbReference type="ChEBI" id="CHEBI:456216"/>
        <dbReference type="EC" id="2.7.11.22"/>
    </reaction>
</comment>
<comment type="catalytic activity">
    <reaction>
        <text>[DNA-directed RNA polymerase] + ATP = phospho-[DNA-directed RNA polymerase] + ADP + H(+)</text>
        <dbReference type="Rhea" id="RHEA:10216"/>
        <dbReference type="Rhea" id="RHEA-COMP:11321"/>
        <dbReference type="Rhea" id="RHEA-COMP:11322"/>
        <dbReference type="ChEBI" id="CHEBI:15378"/>
        <dbReference type="ChEBI" id="CHEBI:30616"/>
        <dbReference type="ChEBI" id="CHEBI:43176"/>
        <dbReference type="ChEBI" id="CHEBI:68546"/>
        <dbReference type="ChEBI" id="CHEBI:456216"/>
        <dbReference type="EC" id="2.7.11.23"/>
    </reaction>
</comment>
<comment type="activity regulation">
    <text evidence="1">Phosphorylation at Thr-14 or Tyr-15 inactivates the enzyme, while phosphorylation at Thr-161 activates it.</text>
</comment>
<comment type="similarity">
    <text evidence="4">Belongs to the protein kinase superfamily. CMGC Ser/Thr protein kinase family. CDC2/CDKX subfamily.</text>
</comment>
<comment type="sequence caution" evidence="4">
    <conflict type="erroneous initiation">
        <sequence resource="EMBL-CDS" id="CAA66233"/>
    </conflict>
</comment>
<sequence>MEQYEKVEKIGEGTYGVVYKARDRVTNETIALKKIRLEQEDEGVPSTAIREISLLKEMQHGNIVRLQDVVHSEKRLYLVFEYLDLDLKKHMDSCPEFSQDPRLVKMFLYQILRGIAYCHSHRVLHRDLKPQNLLIDRRTNALKLADFGLARAFGIPVRTFTHEVVTLWYRAPEILLGSRHYSTPVDVWSVGCIFAEMVNQRPLFPGDSEIDELFKIFRVMGTPNEETWPGVTSLPDFKSAFPKWPAKELAAVVPNLDASGLDLLDKMLRLDPSKRITARNALQHEYFKDIGFVP</sequence>